<comment type="function">
    <text evidence="1">May be involved in the metabolism of insect hormones and in the breakdown of synthetic insecticides.</text>
</comment>
<comment type="cofactor">
    <cofactor evidence="1">
        <name>heme</name>
        <dbReference type="ChEBI" id="CHEBI:30413"/>
    </cofactor>
</comment>
<comment type="subcellular location">
    <subcellularLocation>
        <location evidence="2">Endoplasmic reticulum membrane</location>
        <topology evidence="2">Peripheral membrane protein</topology>
    </subcellularLocation>
    <subcellularLocation>
        <location evidence="2">Microsome membrane</location>
        <topology evidence="2">Peripheral membrane protein</topology>
    </subcellularLocation>
</comment>
<comment type="similarity">
    <text evidence="2">Belongs to the cytochrome P450 family.</text>
</comment>
<organism>
    <name type="scientific">Drosophila melanogaster</name>
    <name type="common">Fruit fly</name>
    <dbReference type="NCBI Taxonomy" id="7227"/>
    <lineage>
        <taxon>Eukaryota</taxon>
        <taxon>Metazoa</taxon>
        <taxon>Ecdysozoa</taxon>
        <taxon>Arthropoda</taxon>
        <taxon>Hexapoda</taxon>
        <taxon>Insecta</taxon>
        <taxon>Pterygota</taxon>
        <taxon>Neoptera</taxon>
        <taxon>Endopterygota</taxon>
        <taxon>Diptera</taxon>
        <taxon>Brachycera</taxon>
        <taxon>Muscomorpha</taxon>
        <taxon>Ephydroidea</taxon>
        <taxon>Drosophilidae</taxon>
        <taxon>Drosophila</taxon>
        <taxon>Sophophora</taxon>
    </lineage>
</organism>
<evidence type="ECO:0000250" key="1"/>
<evidence type="ECO:0000305" key="2"/>
<proteinExistence type="evidence at transcript level"/>
<accession>Q9VRI9</accession>
<feature type="chain" id="PRO_0000051888" description="Probable cytochrome P450 6t1">
    <location>
        <begin position="1"/>
        <end position="529"/>
    </location>
</feature>
<feature type="binding site" description="axial binding residue" evidence="1">
    <location>
        <position position="472"/>
    </location>
    <ligand>
        <name>heme</name>
        <dbReference type="ChEBI" id="CHEBI:30413"/>
    </ligand>
    <ligandPart>
        <name>Fe</name>
        <dbReference type="ChEBI" id="CHEBI:18248"/>
    </ligandPart>
</feature>
<protein>
    <recommendedName>
        <fullName>Probable cytochrome P450 6t1</fullName>
        <ecNumber>1.14.-.-</ecNumber>
    </recommendedName>
    <alternativeName>
        <fullName>CYPVIT1</fullName>
    </alternativeName>
</protein>
<gene>
    <name type="primary">Cyp6t1</name>
    <name type="ORF">CG1644</name>
</gene>
<reference key="1">
    <citation type="journal article" date="2000" name="Science">
        <title>The genome sequence of Drosophila melanogaster.</title>
        <authorList>
            <person name="Adams M.D."/>
            <person name="Celniker S.E."/>
            <person name="Holt R.A."/>
            <person name="Evans C.A."/>
            <person name="Gocayne J.D."/>
            <person name="Amanatides P.G."/>
            <person name="Scherer S.E."/>
            <person name="Li P.W."/>
            <person name="Hoskins R.A."/>
            <person name="Galle R.F."/>
            <person name="George R.A."/>
            <person name="Lewis S.E."/>
            <person name="Richards S."/>
            <person name="Ashburner M."/>
            <person name="Henderson S.N."/>
            <person name="Sutton G.G."/>
            <person name="Wortman J.R."/>
            <person name="Yandell M.D."/>
            <person name="Zhang Q."/>
            <person name="Chen L.X."/>
            <person name="Brandon R.C."/>
            <person name="Rogers Y.-H.C."/>
            <person name="Blazej R.G."/>
            <person name="Champe M."/>
            <person name="Pfeiffer B.D."/>
            <person name="Wan K.H."/>
            <person name="Doyle C."/>
            <person name="Baxter E.G."/>
            <person name="Helt G."/>
            <person name="Nelson C.R."/>
            <person name="Miklos G.L.G."/>
            <person name="Abril J.F."/>
            <person name="Agbayani A."/>
            <person name="An H.-J."/>
            <person name="Andrews-Pfannkoch C."/>
            <person name="Baldwin D."/>
            <person name="Ballew R.M."/>
            <person name="Basu A."/>
            <person name="Baxendale J."/>
            <person name="Bayraktaroglu L."/>
            <person name="Beasley E.M."/>
            <person name="Beeson K.Y."/>
            <person name="Benos P.V."/>
            <person name="Berman B.P."/>
            <person name="Bhandari D."/>
            <person name="Bolshakov S."/>
            <person name="Borkova D."/>
            <person name="Botchan M.R."/>
            <person name="Bouck J."/>
            <person name="Brokstein P."/>
            <person name="Brottier P."/>
            <person name="Burtis K.C."/>
            <person name="Busam D.A."/>
            <person name="Butler H."/>
            <person name="Cadieu E."/>
            <person name="Center A."/>
            <person name="Chandra I."/>
            <person name="Cherry J.M."/>
            <person name="Cawley S."/>
            <person name="Dahlke C."/>
            <person name="Davenport L.B."/>
            <person name="Davies P."/>
            <person name="de Pablos B."/>
            <person name="Delcher A."/>
            <person name="Deng Z."/>
            <person name="Mays A.D."/>
            <person name="Dew I."/>
            <person name="Dietz S.M."/>
            <person name="Dodson K."/>
            <person name="Doup L.E."/>
            <person name="Downes M."/>
            <person name="Dugan-Rocha S."/>
            <person name="Dunkov B.C."/>
            <person name="Dunn P."/>
            <person name="Durbin K.J."/>
            <person name="Evangelista C.C."/>
            <person name="Ferraz C."/>
            <person name="Ferriera S."/>
            <person name="Fleischmann W."/>
            <person name="Fosler C."/>
            <person name="Gabrielian A.E."/>
            <person name="Garg N.S."/>
            <person name="Gelbart W.M."/>
            <person name="Glasser K."/>
            <person name="Glodek A."/>
            <person name="Gong F."/>
            <person name="Gorrell J.H."/>
            <person name="Gu Z."/>
            <person name="Guan P."/>
            <person name="Harris M."/>
            <person name="Harris N.L."/>
            <person name="Harvey D.A."/>
            <person name="Heiman T.J."/>
            <person name="Hernandez J.R."/>
            <person name="Houck J."/>
            <person name="Hostin D."/>
            <person name="Houston K.A."/>
            <person name="Howland T.J."/>
            <person name="Wei M.-H."/>
            <person name="Ibegwam C."/>
            <person name="Jalali M."/>
            <person name="Kalush F."/>
            <person name="Karpen G.H."/>
            <person name="Ke Z."/>
            <person name="Kennison J.A."/>
            <person name="Ketchum K.A."/>
            <person name="Kimmel B.E."/>
            <person name="Kodira C.D."/>
            <person name="Kraft C.L."/>
            <person name="Kravitz S."/>
            <person name="Kulp D."/>
            <person name="Lai Z."/>
            <person name="Lasko P."/>
            <person name="Lei Y."/>
            <person name="Levitsky A.A."/>
            <person name="Li J.H."/>
            <person name="Li Z."/>
            <person name="Liang Y."/>
            <person name="Lin X."/>
            <person name="Liu X."/>
            <person name="Mattei B."/>
            <person name="McIntosh T.C."/>
            <person name="McLeod M.P."/>
            <person name="McPherson D."/>
            <person name="Merkulov G."/>
            <person name="Milshina N.V."/>
            <person name="Mobarry C."/>
            <person name="Morris J."/>
            <person name="Moshrefi A."/>
            <person name="Mount S.M."/>
            <person name="Moy M."/>
            <person name="Murphy B."/>
            <person name="Murphy L."/>
            <person name="Muzny D.M."/>
            <person name="Nelson D.L."/>
            <person name="Nelson D.R."/>
            <person name="Nelson K.A."/>
            <person name="Nixon K."/>
            <person name="Nusskern D.R."/>
            <person name="Pacleb J.M."/>
            <person name="Palazzolo M."/>
            <person name="Pittman G.S."/>
            <person name="Pan S."/>
            <person name="Pollard J."/>
            <person name="Puri V."/>
            <person name="Reese M.G."/>
            <person name="Reinert K."/>
            <person name="Remington K."/>
            <person name="Saunders R.D.C."/>
            <person name="Scheeler F."/>
            <person name="Shen H."/>
            <person name="Shue B.C."/>
            <person name="Siden-Kiamos I."/>
            <person name="Simpson M."/>
            <person name="Skupski M.P."/>
            <person name="Smith T.J."/>
            <person name="Spier E."/>
            <person name="Spradling A.C."/>
            <person name="Stapleton M."/>
            <person name="Strong R."/>
            <person name="Sun E."/>
            <person name="Svirskas R."/>
            <person name="Tector C."/>
            <person name="Turner R."/>
            <person name="Venter E."/>
            <person name="Wang A.H."/>
            <person name="Wang X."/>
            <person name="Wang Z.-Y."/>
            <person name="Wassarman D.A."/>
            <person name="Weinstock G.M."/>
            <person name="Weissenbach J."/>
            <person name="Williams S.M."/>
            <person name="Woodage T."/>
            <person name="Worley K.C."/>
            <person name="Wu D."/>
            <person name="Yang S."/>
            <person name="Yao Q.A."/>
            <person name="Ye J."/>
            <person name="Yeh R.-F."/>
            <person name="Zaveri J.S."/>
            <person name="Zhan M."/>
            <person name="Zhang G."/>
            <person name="Zhao Q."/>
            <person name="Zheng L."/>
            <person name="Zheng X.H."/>
            <person name="Zhong F.N."/>
            <person name="Zhong W."/>
            <person name="Zhou X."/>
            <person name="Zhu S.C."/>
            <person name="Zhu X."/>
            <person name="Smith H.O."/>
            <person name="Gibbs R.A."/>
            <person name="Myers E.W."/>
            <person name="Rubin G.M."/>
            <person name="Venter J.C."/>
        </authorList>
    </citation>
    <scope>NUCLEOTIDE SEQUENCE [LARGE SCALE GENOMIC DNA]</scope>
    <source>
        <strain>Berkeley</strain>
    </source>
</reference>
<reference key="2">
    <citation type="journal article" date="2002" name="Genome Biol.">
        <title>Annotation of the Drosophila melanogaster euchromatic genome: a systematic review.</title>
        <authorList>
            <person name="Misra S."/>
            <person name="Crosby M.A."/>
            <person name="Mungall C.J."/>
            <person name="Matthews B.B."/>
            <person name="Campbell K.S."/>
            <person name="Hradecky P."/>
            <person name="Huang Y."/>
            <person name="Kaminker J.S."/>
            <person name="Millburn G.H."/>
            <person name="Prochnik S.E."/>
            <person name="Smith C.D."/>
            <person name="Tupy J.L."/>
            <person name="Whitfield E.J."/>
            <person name="Bayraktaroglu L."/>
            <person name="Berman B.P."/>
            <person name="Bettencourt B.R."/>
            <person name="Celniker S.E."/>
            <person name="de Grey A.D.N.J."/>
            <person name="Drysdale R.A."/>
            <person name="Harris N.L."/>
            <person name="Richter J."/>
            <person name="Russo S."/>
            <person name="Schroeder A.J."/>
            <person name="Shu S.Q."/>
            <person name="Stapleton M."/>
            <person name="Yamada C."/>
            <person name="Ashburner M."/>
            <person name="Gelbart W.M."/>
            <person name="Rubin G.M."/>
            <person name="Lewis S.E."/>
        </authorList>
    </citation>
    <scope>GENOME REANNOTATION</scope>
    <source>
        <strain>Berkeley</strain>
    </source>
</reference>
<reference key="3">
    <citation type="journal article" date="2002" name="Genome Biol.">
        <title>A Drosophila full-length cDNA resource.</title>
        <authorList>
            <person name="Stapleton M."/>
            <person name="Carlson J.W."/>
            <person name="Brokstein P."/>
            <person name="Yu C."/>
            <person name="Champe M."/>
            <person name="George R.A."/>
            <person name="Guarin H."/>
            <person name="Kronmiller B."/>
            <person name="Pacleb J.M."/>
            <person name="Park S."/>
            <person name="Wan K.H."/>
            <person name="Rubin G.M."/>
            <person name="Celniker S.E."/>
        </authorList>
    </citation>
    <scope>NUCLEOTIDE SEQUENCE [LARGE SCALE MRNA]</scope>
    <source>
        <strain>Berkeley</strain>
        <tissue>Embryo</tissue>
    </source>
</reference>
<sequence length="529" mass="60519">MIAVFSLIAAALAVGSLVLLPVVLRGGCLLVVTIVWLWQILHFWHWRRLGVPFVPAAPFVGNVWNLLRGACCFGDQFRELYESKEAAGRAFVGIDVLHNHALLLRDPALIKRIMVEDFAQFSSRFETTDPTCDTMGSQNLFFSKYETWRETHKIFAPFFAAGKVRNMYGLLENIGQKLEEHMEQKLSGRDSMELEVKQLCALFTTDIIASLAFGIEAHSLQNPEAEFRRMCIEVNDPRPKRLLHLFTMFFFPRLSHRVGTHLYSEEYERFMRKSMDYVLSQRAESGENRHDLIDIFLQLKRTEPAESIIHRPDFFAAQAAFLLLAGFDTSSSTITFALYELAKNTTIQDRLRTELRAALQSSQDRQLSCDTVTGLVYLRQVVDEVLRLYPPTAFLDRCCNSRTGYDLSPWNGGSPFKLRAGTPVYISVLGIHRDAQYWPNPEVFDPERFSAEQRQQHHPMTYLPFGAGPRGCIGTLLGQLEIKVGLLHILNHFRVEVCERTLPEMRFDPKAFVLTAHNGTYLRFVKNSL</sequence>
<name>CP6T1_DROME</name>
<keyword id="KW-0256">Endoplasmic reticulum</keyword>
<keyword id="KW-0349">Heme</keyword>
<keyword id="KW-0408">Iron</keyword>
<keyword id="KW-0472">Membrane</keyword>
<keyword id="KW-0479">Metal-binding</keyword>
<keyword id="KW-0492">Microsome</keyword>
<keyword id="KW-0503">Monooxygenase</keyword>
<keyword id="KW-0560">Oxidoreductase</keyword>
<keyword id="KW-1185">Reference proteome</keyword>
<dbReference type="EC" id="1.14.-.-"/>
<dbReference type="EMBL" id="AE014298">
    <property type="protein sequence ID" value="AAF50807.1"/>
    <property type="molecule type" value="Genomic_DNA"/>
</dbReference>
<dbReference type="EMBL" id="AY071245">
    <property type="protein sequence ID" value="AAL48867.1"/>
    <property type="molecule type" value="mRNA"/>
</dbReference>
<dbReference type="RefSeq" id="NP_608457.1">
    <property type="nucleotide sequence ID" value="NM_134613.3"/>
</dbReference>
<dbReference type="SMR" id="Q9VRI9"/>
<dbReference type="BioGRID" id="59401">
    <property type="interactions" value="1"/>
</dbReference>
<dbReference type="DIP" id="DIP-22421N"/>
<dbReference type="STRING" id="7227.FBpp0076908"/>
<dbReference type="PaxDb" id="7227-FBpp0076908"/>
<dbReference type="DNASU" id="33127"/>
<dbReference type="EnsemblMetazoa" id="FBtr0077212">
    <property type="protein sequence ID" value="FBpp0076908"/>
    <property type="gene ID" value="FBgn0031182"/>
</dbReference>
<dbReference type="GeneID" id="33127"/>
<dbReference type="KEGG" id="dme:Dmel_CG1644"/>
<dbReference type="UCSC" id="CG1644-RA">
    <property type="organism name" value="d. melanogaster"/>
</dbReference>
<dbReference type="AGR" id="FB:FBgn0031182"/>
<dbReference type="CTD" id="33127"/>
<dbReference type="FlyBase" id="FBgn0031182">
    <property type="gene designation" value="Cyp6t1"/>
</dbReference>
<dbReference type="VEuPathDB" id="VectorBase:FBgn0031182"/>
<dbReference type="eggNOG" id="KOG0158">
    <property type="taxonomic scope" value="Eukaryota"/>
</dbReference>
<dbReference type="GeneTree" id="ENSGT00940000167661"/>
<dbReference type="HOGENOM" id="CLU_001570_5_2_1"/>
<dbReference type="InParanoid" id="Q9VRI9"/>
<dbReference type="OMA" id="LDRCCNA"/>
<dbReference type="OrthoDB" id="2789670at2759"/>
<dbReference type="PhylomeDB" id="Q9VRI9"/>
<dbReference type="BioGRID-ORCS" id="33127">
    <property type="hits" value="0 hits in 1 CRISPR screen"/>
</dbReference>
<dbReference type="GenomeRNAi" id="33127"/>
<dbReference type="PRO" id="PR:Q9VRI9"/>
<dbReference type="Proteomes" id="UP000000803">
    <property type="component" value="Chromosome X"/>
</dbReference>
<dbReference type="Bgee" id="FBgn0031182">
    <property type="expression patterns" value="Expressed in adult anterior midgut class II enteroendocrine cell in adult midgut (Drosophila) and 25 other cell types or tissues"/>
</dbReference>
<dbReference type="ExpressionAtlas" id="Q9VRI9">
    <property type="expression patterns" value="baseline and differential"/>
</dbReference>
<dbReference type="GO" id="GO:0005789">
    <property type="term" value="C:endoplasmic reticulum membrane"/>
    <property type="evidence" value="ECO:0007669"/>
    <property type="project" value="UniProtKB-SubCell"/>
</dbReference>
<dbReference type="GO" id="GO:0020037">
    <property type="term" value="F:heme binding"/>
    <property type="evidence" value="ECO:0007669"/>
    <property type="project" value="InterPro"/>
</dbReference>
<dbReference type="GO" id="GO:0005506">
    <property type="term" value="F:iron ion binding"/>
    <property type="evidence" value="ECO:0007669"/>
    <property type="project" value="InterPro"/>
</dbReference>
<dbReference type="GO" id="GO:0004497">
    <property type="term" value="F:monooxygenase activity"/>
    <property type="evidence" value="ECO:0007669"/>
    <property type="project" value="UniProtKB-KW"/>
</dbReference>
<dbReference type="GO" id="GO:0016705">
    <property type="term" value="F:oxidoreductase activity, acting on paired donors, with incorporation or reduction of molecular oxygen"/>
    <property type="evidence" value="ECO:0007669"/>
    <property type="project" value="InterPro"/>
</dbReference>
<dbReference type="GO" id="GO:0046701">
    <property type="term" value="P:insecticide catabolic process"/>
    <property type="evidence" value="ECO:0000318"/>
    <property type="project" value="GO_Central"/>
</dbReference>
<dbReference type="GO" id="GO:0046680">
    <property type="term" value="P:response to DDT"/>
    <property type="evidence" value="ECO:0000318"/>
    <property type="project" value="GO_Central"/>
</dbReference>
<dbReference type="CDD" id="cd11056">
    <property type="entry name" value="CYP6-like"/>
    <property type="match status" value="1"/>
</dbReference>
<dbReference type="FunFam" id="1.10.630.10:FF:000042">
    <property type="entry name" value="Cytochrome P450"/>
    <property type="match status" value="1"/>
</dbReference>
<dbReference type="Gene3D" id="1.10.630.10">
    <property type="entry name" value="Cytochrome P450"/>
    <property type="match status" value="1"/>
</dbReference>
<dbReference type="InterPro" id="IPR001128">
    <property type="entry name" value="Cyt_P450"/>
</dbReference>
<dbReference type="InterPro" id="IPR017972">
    <property type="entry name" value="Cyt_P450_CS"/>
</dbReference>
<dbReference type="InterPro" id="IPR002401">
    <property type="entry name" value="Cyt_P450_E_grp-I"/>
</dbReference>
<dbReference type="InterPro" id="IPR036396">
    <property type="entry name" value="Cyt_P450_sf"/>
</dbReference>
<dbReference type="InterPro" id="IPR050476">
    <property type="entry name" value="Insect_CytP450_Detox"/>
</dbReference>
<dbReference type="PANTHER" id="PTHR24292">
    <property type="entry name" value="CYTOCHROME P450"/>
    <property type="match status" value="1"/>
</dbReference>
<dbReference type="PANTHER" id="PTHR24292:SF45">
    <property type="entry name" value="CYTOCHROME P450 6G1-RELATED"/>
    <property type="match status" value="1"/>
</dbReference>
<dbReference type="Pfam" id="PF00067">
    <property type="entry name" value="p450"/>
    <property type="match status" value="1"/>
</dbReference>
<dbReference type="PRINTS" id="PR00463">
    <property type="entry name" value="EP450I"/>
</dbReference>
<dbReference type="PRINTS" id="PR00385">
    <property type="entry name" value="P450"/>
</dbReference>
<dbReference type="SUPFAM" id="SSF48264">
    <property type="entry name" value="Cytochrome P450"/>
    <property type="match status" value="1"/>
</dbReference>
<dbReference type="PROSITE" id="PS00086">
    <property type="entry name" value="CYTOCHROME_P450"/>
    <property type="match status" value="1"/>
</dbReference>